<keyword id="KW-0113">Calvin cycle</keyword>
<keyword id="KW-0150">Chloroplast</keyword>
<keyword id="KW-0521">NADP</keyword>
<keyword id="KW-0560">Oxidoreductase</keyword>
<keyword id="KW-0934">Plastid</keyword>
<keyword id="KW-0809">Transit peptide</keyword>
<evidence type="ECO:0000250" key="1"/>
<evidence type="ECO:0000255" key="2">
    <source>
        <dbReference type="PROSITE-ProRule" id="PRU10009"/>
    </source>
</evidence>
<evidence type="ECO:0000256" key="3">
    <source>
        <dbReference type="SAM" id="MobiDB-lite"/>
    </source>
</evidence>
<evidence type="ECO:0000305" key="4"/>
<protein>
    <recommendedName>
        <fullName>Glyceraldehyde-3-phosphate dehydrogenase B, chloroplastic</fullName>
        <ecNumber>1.2.1.13</ecNumber>
    </recommendedName>
    <alternativeName>
        <fullName>NADP-dependent glyceraldehydephosphate dehydrogenase subunit B</fullName>
    </alternativeName>
</protein>
<sequence length="451" mass="48097">MATHAALASTRIPTNTRFPSKTSHSFPSQCASKRLEVGEFSGLKSTSCISYVHSARDSSFYDVVAAQLTSKANGSTAVKGVTVAKLKVAINGFGRIGRNFLRCWHGRKDSPLEVIVVNDSGGVKNASHLLKYDSMLGTFKAEVKILNNETITVDGKPIKVVSSRDPLKLPWAELGIDIVIEGTGVFVDGPGAGKHIQAGAKKVIITAPAKGADIPTYVIGVNEQDYGHEVADIISNASCTTNCLAPFAKVLDEEFGIVKGTMTTTHSYTGDQRLLDASHRDLRRARAAALNIVPTSTGAAKAVSLVLPQLKGKLNGIALRVPTPNVSVVDLVVNVAKKGISAEDVNAAFRKAAEGPLKGILDVCDVPLVSVDFRCSDVSTTIDSSLTMVMGDDMVKVVAWYDNEWGYSQRVVDLAHLVANKWPGTPKVGSGDPLEDFCETNPADEECKVYE</sequence>
<accession>P12859</accession>
<comment type="catalytic activity">
    <reaction>
        <text>D-glyceraldehyde 3-phosphate + phosphate + NADP(+) = (2R)-3-phospho-glyceroyl phosphate + NADPH + H(+)</text>
        <dbReference type="Rhea" id="RHEA:10296"/>
        <dbReference type="ChEBI" id="CHEBI:15378"/>
        <dbReference type="ChEBI" id="CHEBI:43474"/>
        <dbReference type="ChEBI" id="CHEBI:57604"/>
        <dbReference type="ChEBI" id="CHEBI:57783"/>
        <dbReference type="ChEBI" id="CHEBI:58349"/>
        <dbReference type="ChEBI" id="CHEBI:59776"/>
        <dbReference type="EC" id="1.2.1.13"/>
    </reaction>
</comment>
<comment type="pathway">
    <text>Carbohydrate biosynthesis; Calvin cycle.</text>
</comment>
<comment type="subunit">
    <text evidence="1">Tetramer of either four A chains (GAPDH 2) or two A and two B chains (GAPDH 1).</text>
</comment>
<comment type="interaction">
    <interactant intactId="EBI-15689988">
        <id>P12859</id>
    </interactant>
    <interactant intactId="EBI-15689968">
        <id>P12858</id>
        <label>GAPA</label>
    </interactant>
    <organismsDiffer>false</organismsDiffer>
    <experiments>2</experiments>
</comment>
<comment type="subcellular location">
    <subcellularLocation>
        <location evidence="1">Plastid</location>
        <location evidence="1">Chloroplast</location>
    </subcellularLocation>
</comment>
<comment type="miscellaneous">
    <text>Plants contain two types of GAPDH: cytosolic forms which participate in glycolysis and chloroplast forms which participate in photosynthesis. All the forms are encoded by distinct genes.</text>
</comment>
<comment type="similarity">
    <text evidence="4">Belongs to the glyceraldehyde-3-phosphate dehydrogenase family.</text>
</comment>
<dbReference type="EC" id="1.2.1.13"/>
<dbReference type="EMBL" id="M55147">
    <property type="protein sequence ID" value="AAA84543.1"/>
    <property type="molecule type" value="Genomic_DNA"/>
</dbReference>
<dbReference type="EMBL" id="X15188">
    <property type="protein sequence ID" value="CAA33262.1"/>
    <property type="molecule type" value="mRNA"/>
</dbReference>
<dbReference type="PIR" id="S16507">
    <property type="entry name" value="DEPMNB"/>
</dbReference>
<dbReference type="SMR" id="P12859"/>
<dbReference type="DIP" id="DIP-29837N"/>
<dbReference type="IntAct" id="P12859">
    <property type="interactions" value="1"/>
</dbReference>
<dbReference type="UniPathway" id="UPA00116"/>
<dbReference type="GO" id="GO:0009507">
    <property type="term" value="C:chloroplast"/>
    <property type="evidence" value="ECO:0007669"/>
    <property type="project" value="UniProtKB-SubCell"/>
</dbReference>
<dbReference type="GO" id="GO:0047100">
    <property type="term" value="F:glyceraldehyde-3-phosphate dehydrogenase (NADP+) (phosphorylating) activity"/>
    <property type="evidence" value="ECO:0007669"/>
    <property type="project" value="UniProtKB-EC"/>
</dbReference>
<dbReference type="GO" id="GO:0051287">
    <property type="term" value="F:NAD binding"/>
    <property type="evidence" value="ECO:0007669"/>
    <property type="project" value="InterPro"/>
</dbReference>
<dbReference type="GO" id="GO:0050661">
    <property type="term" value="F:NADP binding"/>
    <property type="evidence" value="ECO:0007669"/>
    <property type="project" value="InterPro"/>
</dbReference>
<dbReference type="GO" id="GO:0006006">
    <property type="term" value="P:glucose metabolic process"/>
    <property type="evidence" value="ECO:0007669"/>
    <property type="project" value="InterPro"/>
</dbReference>
<dbReference type="GO" id="GO:0019253">
    <property type="term" value="P:reductive pentose-phosphate cycle"/>
    <property type="evidence" value="ECO:0007669"/>
    <property type="project" value="UniProtKB-UniPathway"/>
</dbReference>
<dbReference type="CDD" id="cd18126">
    <property type="entry name" value="GAPDH_I_C"/>
    <property type="match status" value="1"/>
</dbReference>
<dbReference type="CDD" id="cd05214">
    <property type="entry name" value="GAPDH_I_N"/>
    <property type="match status" value="1"/>
</dbReference>
<dbReference type="FunFam" id="3.30.360.10:FF:000002">
    <property type="entry name" value="Glyceraldehyde-3-phosphate dehydrogenase"/>
    <property type="match status" value="1"/>
</dbReference>
<dbReference type="FunFam" id="3.40.50.720:FF:000001">
    <property type="entry name" value="Glyceraldehyde-3-phosphate dehydrogenase"/>
    <property type="match status" value="1"/>
</dbReference>
<dbReference type="Gene3D" id="3.30.360.10">
    <property type="entry name" value="Dihydrodipicolinate Reductase, domain 2"/>
    <property type="match status" value="1"/>
</dbReference>
<dbReference type="Gene3D" id="3.40.50.720">
    <property type="entry name" value="NAD(P)-binding Rossmann-like Domain"/>
    <property type="match status" value="1"/>
</dbReference>
<dbReference type="InterPro" id="IPR020831">
    <property type="entry name" value="GlycerAld/Erythrose_P_DH"/>
</dbReference>
<dbReference type="InterPro" id="IPR020830">
    <property type="entry name" value="GlycerAld_3-P_DH_AS"/>
</dbReference>
<dbReference type="InterPro" id="IPR020829">
    <property type="entry name" value="GlycerAld_3-P_DH_cat"/>
</dbReference>
<dbReference type="InterPro" id="IPR020828">
    <property type="entry name" value="GlycerAld_3-P_DH_NAD(P)-bd"/>
</dbReference>
<dbReference type="InterPro" id="IPR006424">
    <property type="entry name" value="Glyceraldehyde-3-P_DH_1"/>
</dbReference>
<dbReference type="InterPro" id="IPR036291">
    <property type="entry name" value="NAD(P)-bd_dom_sf"/>
</dbReference>
<dbReference type="NCBIfam" id="TIGR01534">
    <property type="entry name" value="GAPDH-I"/>
    <property type="match status" value="1"/>
</dbReference>
<dbReference type="PANTHER" id="PTHR43148">
    <property type="entry name" value="GLYCERALDEHYDE-3-PHOSPHATE DEHYDROGENASE 2"/>
    <property type="match status" value="1"/>
</dbReference>
<dbReference type="Pfam" id="PF02800">
    <property type="entry name" value="Gp_dh_C"/>
    <property type="match status" value="1"/>
</dbReference>
<dbReference type="Pfam" id="PF00044">
    <property type="entry name" value="Gp_dh_N"/>
    <property type="match status" value="1"/>
</dbReference>
<dbReference type="PRINTS" id="PR00078">
    <property type="entry name" value="G3PDHDRGNASE"/>
</dbReference>
<dbReference type="SMART" id="SM00846">
    <property type="entry name" value="Gp_dh_N"/>
    <property type="match status" value="1"/>
</dbReference>
<dbReference type="SUPFAM" id="SSF55347">
    <property type="entry name" value="Glyceraldehyde-3-phosphate dehydrogenase-like, C-terminal domain"/>
    <property type="match status" value="1"/>
</dbReference>
<dbReference type="SUPFAM" id="SSF51735">
    <property type="entry name" value="NAD(P)-binding Rossmann-fold domains"/>
    <property type="match status" value="1"/>
</dbReference>
<dbReference type="PROSITE" id="PS00071">
    <property type="entry name" value="GAPDH"/>
    <property type="match status" value="1"/>
</dbReference>
<proteinExistence type="evidence at protein level"/>
<reference key="1">
    <citation type="journal article" date="1990" name="Proc. Natl. Acad. Sci. U.S.A.">
        <title>Differential intron loss and endosymbiotic transfer of chloroplast glyceraldehyde-3-phosphate dehydrogenase genes to the nucleus.</title>
        <authorList>
            <person name="Liaud M.-F."/>
            <person name="Zhang D.-X."/>
            <person name="Cerff R."/>
        </authorList>
    </citation>
    <scope>NUCLEOTIDE SEQUENCE</scope>
    <source>
        <strain>cv. Rosakrone</strain>
        <tissue>Seedling</tissue>
    </source>
</reference>
<reference key="2">
    <citation type="journal article" date="1989" name="Plant Mol. Biol.">
        <title>Cloning and sequence analysis of cDNAs encoding the cytosolic precursors of subunits GapA and GapB of chloroplast glyceraldehyde-3-phosphate dehydrogenase from pea and spinach.</title>
        <authorList>
            <person name="Brinkmann H."/>
            <person name="Cerff R."/>
            <person name="Salomon M."/>
            <person name="Soll J."/>
        </authorList>
    </citation>
    <scope>NUCLEOTIDE SEQUENCE [MRNA] OF 5-451</scope>
    <source>
        <strain>cv. Rosakrone</strain>
        <tissue>Seedling</tissue>
    </source>
</reference>
<name>G3PB_PEA</name>
<organism>
    <name type="scientific">Pisum sativum</name>
    <name type="common">Garden pea</name>
    <name type="synonym">Lathyrus oleraceus</name>
    <dbReference type="NCBI Taxonomy" id="3888"/>
    <lineage>
        <taxon>Eukaryota</taxon>
        <taxon>Viridiplantae</taxon>
        <taxon>Streptophyta</taxon>
        <taxon>Embryophyta</taxon>
        <taxon>Tracheophyta</taxon>
        <taxon>Spermatophyta</taxon>
        <taxon>Magnoliopsida</taxon>
        <taxon>eudicotyledons</taxon>
        <taxon>Gunneridae</taxon>
        <taxon>Pentapetalae</taxon>
        <taxon>rosids</taxon>
        <taxon>fabids</taxon>
        <taxon>Fabales</taxon>
        <taxon>Fabaceae</taxon>
        <taxon>Papilionoideae</taxon>
        <taxon>50 kb inversion clade</taxon>
        <taxon>NPAAA clade</taxon>
        <taxon>Hologalegina</taxon>
        <taxon>IRL clade</taxon>
        <taxon>Fabeae</taxon>
        <taxon>Pisum</taxon>
    </lineage>
</organism>
<feature type="transit peptide" description="Chloroplast">
    <location>
        <begin position="1"/>
        <end position="84"/>
    </location>
</feature>
<feature type="chain" id="PRO_0000010424" description="Glyceraldehyde-3-phosphate dehydrogenase B, chloroplastic">
    <location>
        <begin position="85"/>
        <end position="451"/>
    </location>
</feature>
<feature type="region of interest" description="Disordered" evidence="3">
    <location>
        <begin position="1"/>
        <end position="25"/>
    </location>
</feature>
<feature type="compositionally biased region" description="Polar residues" evidence="3">
    <location>
        <begin position="11"/>
        <end position="25"/>
    </location>
</feature>
<feature type="active site" description="Nucleophile" evidence="2">
    <location>
        <position position="239"/>
    </location>
</feature>
<feature type="binding site" evidence="1">
    <location>
        <begin position="95"/>
        <end position="96"/>
    </location>
    <ligand>
        <name>NADP(+)</name>
        <dbReference type="ChEBI" id="CHEBI:58349"/>
    </ligand>
</feature>
<feature type="binding site" evidence="1">
    <location>
        <position position="119"/>
    </location>
    <ligand>
        <name>NADP(+)</name>
        <dbReference type="ChEBI" id="CHEBI:58349"/>
    </ligand>
</feature>
<feature type="binding site" evidence="1">
    <location>
        <position position="164"/>
    </location>
    <ligand>
        <name>NADP(+)</name>
        <dbReference type="ChEBI" id="CHEBI:58349"/>
    </ligand>
</feature>
<feature type="binding site" evidence="1">
    <location>
        <begin position="238"/>
        <end position="240"/>
    </location>
    <ligand>
        <name>D-glyceraldehyde 3-phosphate</name>
        <dbReference type="ChEBI" id="CHEBI:59776"/>
    </ligand>
</feature>
<feature type="binding site" evidence="1">
    <location>
        <position position="269"/>
    </location>
    <ligand>
        <name>D-glyceraldehyde 3-phosphate</name>
        <dbReference type="ChEBI" id="CHEBI:59776"/>
    </ligand>
</feature>
<feature type="binding site" evidence="1">
    <location>
        <position position="284"/>
    </location>
    <ligand>
        <name>D-glyceraldehyde 3-phosphate</name>
        <dbReference type="ChEBI" id="CHEBI:59776"/>
    </ligand>
</feature>
<feature type="binding site" evidence="1">
    <location>
        <begin position="297"/>
        <end position="298"/>
    </location>
    <ligand>
        <name>D-glyceraldehyde 3-phosphate</name>
        <dbReference type="ChEBI" id="CHEBI:59776"/>
    </ligand>
</feature>
<feature type="binding site" evidence="1">
    <location>
        <position position="320"/>
    </location>
    <ligand>
        <name>D-glyceraldehyde 3-phosphate</name>
        <dbReference type="ChEBI" id="CHEBI:59776"/>
    </ligand>
</feature>
<feature type="binding site" evidence="1">
    <location>
        <position position="403"/>
    </location>
    <ligand>
        <name>NADP(+)</name>
        <dbReference type="ChEBI" id="CHEBI:58349"/>
    </ligand>
</feature>
<feature type="site" description="Activates thiol group during catalysis" evidence="1">
    <location>
        <position position="266"/>
    </location>
</feature>
<feature type="sequence conflict" description="In Ref. 2; CAA33262." evidence="4" ref="2">
    <original>F</original>
    <variation>S</variation>
    <location>
        <position position="255"/>
    </location>
</feature>
<gene>
    <name type="primary">GAPB</name>
    <name type="synonym">GPB1</name>
</gene>